<gene>
    <name type="primary">speG</name>
    <name type="ordered locus">SpyM3_0155</name>
</gene>
<name>SPEG_STRP3</name>
<reference key="1">
    <citation type="journal article" date="2002" name="Proc. Natl. Acad. Sci. U.S.A.">
        <title>Genome sequence of a serotype M3 strain of group A Streptococcus: phage-encoded toxins, the high-virulence phenotype, and clone emergence.</title>
        <authorList>
            <person name="Beres S.B."/>
            <person name="Sylva G.L."/>
            <person name="Barbian K.D."/>
            <person name="Lei B."/>
            <person name="Hoff J.S."/>
            <person name="Mammarella N.D."/>
            <person name="Liu M.-Y."/>
            <person name="Smoot J.C."/>
            <person name="Porcella S.F."/>
            <person name="Parkins L.D."/>
            <person name="Campbell D.S."/>
            <person name="Smith T.M."/>
            <person name="McCormick J.K."/>
            <person name="Leung D.Y.M."/>
            <person name="Schlievert P.M."/>
            <person name="Musser J.M."/>
        </authorList>
    </citation>
    <scope>NUCLEOTIDE SEQUENCE [LARGE SCALE GENOMIC DNA]</scope>
    <source>
        <strain>ATCC BAA-595 / MGAS315</strain>
    </source>
</reference>
<evidence type="ECO:0000250" key="1"/>
<evidence type="ECO:0000255" key="2"/>
<evidence type="ECO:0000305" key="3"/>
<keyword id="KW-0732">Signal</keyword>
<keyword id="KW-0800">Toxin</keyword>
<keyword id="KW-0843">Virulence</keyword>
<feature type="signal peptide" evidence="2">
    <location>
        <begin position="1"/>
        <end position="24"/>
    </location>
</feature>
<feature type="chain" id="PRO_0000035602" description="Exotoxin type G">
    <location>
        <begin position="25"/>
        <end position="234"/>
    </location>
</feature>
<comment type="function">
    <text evidence="1">Mitogenic for human peripheral blood lymphocytes.</text>
</comment>
<comment type="miscellaneous">
    <text evidence="1">Binds to major histocompatibility complex class II beta chain.</text>
</comment>
<comment type="similarity">
    <text evidence="3">Belongs to the staphylococcal/streptococcal toxin family.</text>
</comment>
<accession>P0DG08</accession>
<accession>Q79YK9</accession>
<accession>Q8K8Q7</accession>
<protein>
    <recommendedName>
        <fullName>Exotoxin type G</fullName>
    </recommendedName>
    <alternativeName>
        <fullName>Pyrogenic exotoxin G</fullName>
    </alternativeName>
    <alternativeName>
        <fullName>SPE G</fullName>
    </alternativeName>
</protein>
<organism>
    <name type="scientific">Streptococcus pyogenes serotype M3 (strain ATCC BAA-595 / MGAS315)</name>
    <dbReference type="NCBI Taxonomy" id="198466"/>
    <lineage>
        <taxon>Bacteria</taxon>
        <taxon>Bacillati</taxon>
        <taxon>Bacillota</taxon>
        <taxon>Bacilli</taxon>
        <taxon>Lactobacillales</taxon>
        <taxon>Streptococcaceae</taxon>
        <taxon>Streptococcus</taxon>
    </lineage>
</organism>
<sequence>MKTNILTIIILSCVFSYGSQLAYADENLKDLKRSLRFAYNITPCDYENVEIAFVTTNSIHINTKQKRSECILYVDSIVSLGITDQFIKGDKVDVFGLPYNFSPPYVDNIYGGIVKHSNQGNKSLQFVGILNQDGKETYLPSEVVRIKKKQFTLQEFDLKIRKFLMEKYNIYDSESRYTSGSLFLATKDSKHYEVDLFNKDDKLLSRDSFFKRYKDNKIFNSEEISHFDIYLKTY</sequence>
<proteinExistence type="inferred from homology"/>
<dbReference type="EMBL" id="AE014074">
    <property type="protein sequence ID" value="AAM78762.1"/>
    <property type="molecule type" value="Genomic_DNA"/>
</dbReference>
<dbReference type="RefSeq" id="WP_011054152.1">
    <property type="nucleotide sequence ID" value="NC_004070.1"/>
</dbReference>
<dbReference type="SMR" id="P0DG08"/>
<dbReference type="KEGG" id="spg:SpyM3_0155"/>
<dbReference type="HOGENOM" id="CLU_093855_1_0_9"/>
<dbReference type="Proteomes" id="UP000000564">
    <property type="component" value="Chromosome"/>
</dbReference>
<dbReference type="GO" id="GO:0005576">
    <property type="term" value="C:extracellular region"/>
    <property type="evidence" value="ECO:0007669"/>
    <property type="project" value="InterPro"/>
</dbReference>
<dbReference type="GO" id="GO:0090729">
    <property type="term" value="F:toxin activity"/>
    <property type="evidence" value="ECO:0007669"/>
    <property type="project" value="UniProtKB-KW"/>
</dbReference>
<dbReference type="Gene3D" id="2.40.50.110">
    <property type="match status" value="1"/>
</dbReference>
<dbReference type="Gene3D" id="3.10.20.120">
    <property type="match status" value="1"/>
</dbReference>
<dbReference type="InterPro" id="IPR008992">
    <property type="entry name" value="Enterotoxin"/>
</dbReference>
<dbReference type="InterPro" id="IPR006126">
    <property type="entry name" value="Staph/Strept_toxin_CS"/>
</dbReference>
<dbReference type="InterPro" id="IPR006173">
    <property type="entry name" value="Staph_tox_OB"/>
</dbReference>
<dbReference type="InterPro" id="IPR016091">
    <property type="entry name" value="SuperAg_toxin_C"/>
</dbReference>
<dbReference type="InterPro" id="IPR013307">
    <property type="entry name" value="Superantigen_bac"/>
</dbReference>
<dbReference type="InterPro" id="IPR006123">
    <property type="entry name" value="Toxin_b-grasp_Staph/Strep"/>
</dbReference>
<dbReference type="InterPro" id="IPR006177">
    <property type="entry name" value="Toxin_bac"/>
</dbReference>
<dbReference type="Pfam" id="PF02876">
    <property type="entry name" value="Stap_Strp_tox_C"/>
    <property type="match status" value="1"/>
</dbReference>
<dbReference type="Pfam" id="PF01123">
    <property type="entry name" value="Stap_Strp_toxin"/>
    <property type="match status" value="1"/>
</dbReference>
<dbReference type="PRINTS" id="PR00279">
    <property type="entry name" value="BACTRLTOXIN"/>
</dbReference>
<dbReference type="PRINTS" id="PR01898">
    <property type="entry name" value="SAGSUPRFAMLY"/>
</dbReference>
<dbReference type="SUPFAM" id="SSF50203">
    <property type="entry name" value="Bacterial enterotoxins"/>
    <property type="match status" value="1"/>
</dbReference>
<dbReference type="SUPFAM" id="SSF54334">
    <property type="entry name" value="Superantigen toxins, C-terminal domain"/>
    <property type="match status" value="1"/>
</dbReference>
<dbReference type="PROSITE" id="PS00278">
    <property type="entry name" value="STAPH_STREP_TOXIN_2"/>
    <property type="match status" value="1"/>
</dbReference>